<accession>Q7Q727</accession>
<name>QTRT2_ANOGA</name>
<evidence type="ECO:0000255" key="1">
    <source>
        <dbReference type="HAMAP-Rule" id="MF_03043"/>
    </source>
</evidence>
<evidence type="ECO:0000256" key="2">
    <source>
        <dbReference type="SAM" id="MobiDB-lite"/>
    </source>
</evidence>
<dbReference type="EMBL" id="AAAB01008960">
    <property type="protein sequence ID" value="EAA11801.3"/>
    <property type="molecule type" value="Genomic_DNA"/>
</dbReference>
<dbReference type="RefSeq" id="XP_315542.3">
    <property type="nucleotide sequence ID" value="XM_315542.4"/>
</dbReference>
<dbReference type="SMR" id="Q7Q727"/>
<dbReference type="FunCoup" id="Q7Q727">
    <property type="interactions" value="1668"/>
</dbReference>
<dbReference type="STRING" id="7165.Q7Q727"/>
<dbReference type="PaxDb" id="7165-AGAP005542-PA"/>
<dbReference type="EnsemblMetazoa" id="AGAP005542-RA">
    <property type="protein sequence ID" value="AGAP005542-PA"/>
    <property type="gene ID" value="AGAP005542"/>
</dbReference>
<dbReference type="GeneID" id="1276225"/>
<dbReference type="KEGG" id="aga:1276225"/>
<dbReference type="VEuPathDB" id="VectorBase:AGAMI1_006601"/>
<dbReference type="VEuPathDB" id="VectorBase:AGAP005542"/>
<dbReference type="eggNOG" id="KOG3909">
    <property type="taxonomic scope" value="Eukaryota"/>
</dbReference>
<dbReference type="HOGENOM" id="CLU_037350_2_0_1"/>
<dbReference type="InParanoid" id="Q7Q727"/>
<dbReference type="OMA" id="VPHIAHD"/>
<dbReference type="PhylomeDB" id="Q7Q727"/>
<dbReference type="Proteomes" id="UP000007062">
    <property type="component" value="Chromosome 2L"/>
</dbReference>
<dbReference type="GO" id="GO:0005737">
    <property type="term" value="C:cytoplasm"/>
    <property type="evidence" value="ECO:0007669"/>
    <property type="project" value="UniProtKB-SubCell"/>
</dbReference>
<dbReference type="GO" id="GO:0046872">
    <property type="term" value="F:metal ion binding"/>
    <property type="evidence" value="ECO:0007669"/>
    <property type="project" value="UniProtKB-KW"/>
</dbReference>
<dbReference type="GO" id="GO:0008479">
    <property type="term" value="F:tRNA-guanosine(34) queuine transglycosylase activity"/>
    <property type="evidence" value="ECO:0007669"/>
    <property type="project" value="UniProtKB-UniRule"/>
</dbReference>
<dbReference type="GO" id="GO:0101030">
    <property type="term" value="P:tRNA-guanine transglycosylation"/>
    <property type="evidence" value="ECO:0000318"/>
    <property type="project" value="GO_Central"/>
</dbReference>
<dbReference type="FunFam" id="3.20.20.105:FF:000008">
    <property type="entry name" value="Queuine tRNA-ribosyltransferase accessory subunit 2"/>
    <property type="match status" value="1"/>
</dbReference>
<dbReference type="Gene3D" id="3.20.20.105">
    <property type="entry name" value="Queuine tRNA-ribosyltransferase-like"/>
    <property type="match status" value="1"/>
</dbReference>
<dbReference type="HAMAP" id="MF_03043">
    <property type="entry name" value="QTRT2"/>
    <property type="match status" value="1"/>
</dbReference>
<dbReference type="InterPro" id="IPR028592">
    <property type="entry name" value="QTRTD1"/>
</dbReference>
<dbReference type="InterPro" id="IPR050852">
    <property type="entry name" value="Queuine_tRNA-ribosyltrfase"/>
</dbReference>
<dbReference type="InterPro" id="IPR036511">
    <property type="entry name" value="TGT-like_sf"/>
</dbReference>
<dbReference type="InterPro" id="IPR002616">
    <property type="entry name" value="tRNA_ribo_trans-like"/>
</dbReference>
<dbReference type="NCBIfam" id="TIGR00449">
    <property type="entry name" value="tgt_general"/>
    <property type="match status" value="1"/>
</dbReference>
<dbReference type="PANTHER" id="PTHR46064">
    <property type="entry name" value="QUEUINE TRNA-RIBOSYLTRANSFERASE ACCESSORY SUBUNIT 2"/>
    <property type="match status" value="1"/>
</dbReference>
<dbReference type="PANTHER" id="PTHR46064:SF1">
    <property type="entry name" value="QUEUINE TRNA-RIBOSYLTRANSFERASE ACCESSORY SUBUNIT 2"/>
    <property type="match status" value="1"/>
</dbReference>
<dbReference type="Pfam" id="PF01702">
    <property type="entry name" value="TGT"/>
    <property type="match status" value="1"/>
</dbReference>
<dbReference type="SUPFAM" id="SSF51713">
    <property type="entry name" value="tRNA-guanine transglycosylase"/>
    <property type="match status" value="1"/>
</dbReference>
<reference key="1">
    <citation type="journal article" date="2002" name="Science">
        <title>The genome sequence of the malaria mosquito Anopheles gambiae.</title>
        <authorList>
            <person name="Holt R.A."/>
            <person name="Subramanian G.M."/>
            <person name="Halpern A."/>
            <person name="Sutton G.G."/>
            <person name="Charlab R."/>
            <person name="Nusskern D.R."/>
            <person name="Wincker P."/>
            <person name="Clark A.G."/>
            <person name="Ribeiro J.M.C."/>
            <person name="Wides R."/>
            <person name="Salzberg S.L."/>
            <person name="Loftus B.J."/>
            <person name="Yandell M.D."/>
            <person name="Majoros W.H."/>
            <person name="Rusch D.B."/>
            <person name="Lai Z."/>
            <person name="Kraft C.L."/>
            <person name="Abril J.F."/>
            <person name="Anthouard V."/>
            <person name="Arensburger P."/>
            <person name="Atkinson P.W."/>
            <person name="Baden H."/>
            <person name="de Berardinis V."/>
            <person name="Baldwin D."/>
            <person name="Benes V."/>
            <person name="Biedler J."/>
            <person name="Blass C."/>
            <person name="Bolanos R."/>
            <person name="Boscus D."/>
            <person name="Barnstead M."/>
            <person name="Cai S."/>
            <person name="Center A."/>
            <person name="Chaturverdi K."/>
            <person name="Christophides G.K."/>
            <person name="Chrystal M.A.M."/>
            <person name="Clamp M."/>
            <person name="Cravchik A."/>
            <person name="Curwen V."/>
            <person name="Dana A."/>
            <person name="Delcher A."/>
            <person name="Dew I."/>
            <person name="Evans C.A."/>
            <person name="Flanigan M."/>
            <person name="Grundschober-Freimoser A."/>
            <person name="Friedli L."/>
            <person name="Gu Z."/>
            <person name="Guan P."/>
            <person name="Guigo R."/>
            <person name="Hillenmeyer M.E."/>
            <person name="Hladun S.L."/>
            <person name="Hogan J.R."/>
            <person name="Hong Y.S."/>
            <person name="Hoover J."/>
            <person name="Jaillon O."/>
            <person name="Ke Z."/>
            <person name="Kodira C.D."/>
            <person name="Kokoza E."/>
            <person name="Koutsos A."/>
            <person name="Letunic I."/>
            <person name="Levitsky A.A."/>
            <person name="Liang Y."/>
            <person name="Lin J.-J."/>
            <person name="Lobo N.F."/>
            <person name="Lopez J.R."/>
            <person name="Malek J.A."/>
            <person name="McIntosh T.C."/>
            <person name="Meister S."/>
            <person name="Miller J.R."/>
            <person name="Mobarry C."/>
            <person name="Mongin E."/>
            <person name="Murphy S.D."/>
            <person name="O'Brochta D.A."/>
            <person name="Pfannkoch C."/>
            <person name="Qi R."/>
            <person name="Regier M.A."/>
            <person name="Remington K."/>
            <person name="Shao H."/>
            <person name="Sharakhova M.V."/>
            <person name="Sitter C.D."/>
            <person name="Shetty J."/>
            <person name="Smith T.J."/>
            <person name="Strong R."/>
            <person name="Sun J."/>
            <person name="Thomasova D."/>
            <person name="Ton L.Q."/>
            <person name="Topalis P."/>
            <person name="Tu Z.J."/>
            <person name="Unger M.F."/>
            <person name="Walenz B."/>
            <person name="Wang A.H."/>
            <person name="Wang J."/>
            <person name="Wang M."/>
            <person name="Wang X."/>
            <person name="Woodford K.J."/>
            <person name="Wortman J.R."/>
            <person name="Wu M."/>
            <person name="Yao A."/>
            <person name="Zdobnov E.M."/>
            <person name="Zhang H."/>
            <person name="Zhao Q."/>
            <person name="Zhao S."/>
            <person name="Zhu S.C."/>
            <person name="Zhimulev I."/>
            <person name="Coluzzi M."/>
            <person name="della Torre A."/>
            <person name="Roth C.W."/>
            <person name="Louis C."/>
            <person name="Kalush F."/>
            <person name="Mural R.J."/>
            <person name="Myers E.W."/>
            <person name="Adams M.D."/>
            <person name="Smith H.O."/>
            <person name="Broder S."/>
            <person name="Gardner M.J."/>
            <person name="Fraser C.M."/>
            <person name="Birney E."/>
            <person name="Bork P."/>
            <person name="Brey P.T."/>
            <person name="Venter J.C."/>
            <person name="Weissenbach J."/>
            <person name="Kafatos F.C."/>
            <person name="Collins F.H."/>
            <person name="Hoffman S.L."/>
        </authorList>
    </citation>
    <scope>NUCLEOTIDE SEQUENCE [LARGE SCALE GENOMIC DNA]</scope>
    <source>
        <strain>PEST</strain>
    </source>
</reference>
<proteinExistence type="inferred from homology"/>
<organism>
    <name type="scientific">Anopheles gambiae</name>
    <name type="common">African malaria mosquito</name>
    <dbReference type="NCBI Taxonomy" id="7165"/>
    <lineage>
        <taxon>Eukaryota</taxon>
        <taxon>Metazoa</taxon>
        <taxon>Ecdysozoa</taxon>
        <taxon>Arthropoda</taxon>
        <taxon>Hexapoda</taxon>
        <taxon>Insecta</taxon>
        <taxon>Pterygota</taxon>
        <taxon>Neoptera</taxon>
        <taxon>Endopterygota</taxon>
        <taxon>Diptera</taxon>
        <taxon>Nematocera</taxon>
        <taxon>Culicoidea</taxon>
        <taxon>Culicidae</taxon>
        <taxon>Anophelinae</taxon>
        <taxon>Anopheles</taxon>
    </lineage>
</organism>
<gene>
    <name type="ORF">AGAP005542</name>
</gene>
<feature type="chain" id="PRO_0000383931" description="Queuine tRNA-ribosyltransferase accessory subunit 2">
    <location>
        <begin position="1"/>
        <end position="432"/>
    </location>
</feature>
<feature type="region of interest" description="Disordered" evidence="2">
    <location>
        <begin position="390"/>
        <end position="432"/>
    </location>
</feature>
<feature type="compositionally biased region" description="Basic and acidic residues" evidence="2">
    <location>
        <begin position="422"/>
        <end position="432"/>
    </location>
</feature>
<feature type="binding site" evidence="1">
    <location>
        <position position="329"/>
    </location>
    <ligand>
        <name>Zn(2+)</name>
        <dbReference type="ChEBI" id="CHEBI:29105"/>
    </ligand>
</feature>
<feature type="binding site" evidence="1">
    <location>
        <position position="331"/>
    </location>
    <ligand>
        <name>Zn(2+)</name>
        <dbReference type="ChEBI" id="CHEBI:29105"/>
    </ligand>
</feature>
<feature type="binding site" evidence="1">
    <location>
        <position position="334"/>
    </location>
    <ligand>
        <name>Zn(2+)</name>
        <dbReference type="ChEBI" id="CHEBI:29105"/>
    </ligand>
</feature>
<feature type="binding site" evidence="1">
    <location>
        <position position="360"/>
    </location>
    <ligand>
        <name>Zn(2+)</name>
        <dbReference type="ChEBI" id="CHEBI:29105"/>
    </ligand>
</feature>
<keyword id="KW-0963">Cytoplasm</keyword>
<keyword id="KW-0479">Metal-binding</keyword>
<keyword id="KW-1185">Reference proteome</keyword>
<keyword id="KW-0819">tRNA processing</keyword>
<keyword id="KW-0862">Zinc</keyword>
<protein>
    <recommendedName>
        <fullName evidence="1">Queuine tRNA-ribosyltransferase accessory subunit 2</fullName>
    </recommendedName>
    <alternativeName>
        <fullName evidence="1">Queuine tRNA-ribosyltransferase domain-containing protein 1</fullName>
    </alternativeName>
</protein>
<comment type="function">
    <text evidence="1">Non-catalytic subunit of the queuine tRNA-ribosyltransferase (TGT) that catalyzes the base-exchange of a guanine (G) residue with queuine (Q) at position 34 (anticodon wobble position) in tRNAs with GU(N) anticodons (tRNA-Asp, -Asn, -His and -Tyr), resulting in the hypermodified nucleoside queuosine (7-(((4,5-cis-dihydroxy-2-cyclopenten-1-yl)amino)methyl)-7-deazaguanosine).</text>
</comment>
<comment type="cofactor">
    <cofactor evidence="1">
        <name>Zn(2+)</name>
        <dbReference type="ChEBI" id="CHEBI:29105"/>
    </cofactor>
    <text evidence="1">Binds 1 zinc ion per subunit.</text>
</comment>
<comment type="subunit">
    <text evidence="1">Heterodimer of a catalytic subunit and an accessory subunit.</text>
</comment>
<comment type="subcellular location">
    <subcellularLocation>
        <location evidence="1">Cytoplasm</location>
    </subcellularLocation>
</comment>
<comment type="similarity">
    <text evidence="1">Belongs to the queuine tRNA-ribosyltransferase family. QTRT2 subfamily.</text>
</comment>
<sequence>MKFTLSTVTKCSGRLGVLGGLDRLPNLSLQTPAFIFHTKGGSIPHLSKEAMQHVSGDPSCFLHLSISNTLHMQEAIKASRITIAEFIAQSNCATLLFVRDPSEPPIPGLPEKDSLPIYTRNGRRNITLEQYMTLVETFRPDAYVPLYDGDTDASSSKKRDQKSLDRTEKFVEQCLEWHRKSDALQSSCLIGPVVGGYNEKLREQSVAFLRQSDDAFAGYLIEGLHMHGPSVARMDGSAALGIVANVCKQLPEAKVRLCFGSYDPALVLEMVAAGVDVFDTSYVYLKAAQEHRALVFSFDVTSTEQEHVTELDTTDARWAEDFGPLLPGCKCYTCQKHSRAYVHHLHNTREMLGPILLMMHNLHHYVEFFKAIRHHVANDSLPELRNHLAGQKSLPPYEPPKEEKLPMPAAQKAELMEPMEDLGEKQNKKQRA</sequence>